<comment type="function">
    <text evidence="1">Catalyzes the isomerization between 2-isopropylmalate and 3-isopropylmalate, via the formation of 2-isopropylmaleate.</text>
</comment>
<comment type="catalytic activity">
    <reaction evidence="1">
        <text>(2R,3S)-3-isopropylmalate = (2S)-2-isopropylmalate</text>
        <dbReference type="Rhea" id="RHEA:32287"/>
        <dbReference type="ChEBI" id="CHEBI:1178"/>
        <dbReference type="ChEBI" id="CHEBI:35121"/>
        <dbReference type="EC" id="4.2.1.33"/>
    </reaction>
</comment>
<comment type="cofactor">
    <cofactor evidence="1">
        <name>[4Fe-4S] cluster</name>
        <dbReference type="ChEBI" id="CHEBI:49883"/>
    </cofactor>
    <text evidence="1">Binds 1 [4Fe-4S] cluster per subunit.</text>
</comment>
<comment type="pathway">
    <text evidence="1">Amino-acid biosynthesis; L-leucine biosynthesis; L-leucine from 3-methyl-2-oxobutanoate: step 2/4.</text>
</comment>
<comment type="subunit">
    <text evidence="1">Heterodimer of LeuC and LeuD.</text>
</comment>
<comment type="similarity">
    <text evidence="1">Belongs to the aconitase/IPM isomerase family. LeuC type 1 subfamily.</text>
</comment>
<sequence length="471" mass="52366">MKKTLYQKLYDSHIVYEEKSQSPILYIDLHLVHEVTSPQAFFSLCSKNRVVRQPKKTFATMDHNVSTIDRNIDSSGLLAKKQMEALIKNCTKFNIKLFDLNHPHQGIVHVIGPEQGITLPGMTIVCGDSHTSTHGAFGALAFGIGTSEVEHVLATQTLKQNRLKSMHIKINGDIDIGITAKDIILFVIKQLGVSRGLGYVIEFSGEIVSKLSMESRMTLCNMSIEMGAKSGIIAPDSVTFSYLCNRKYVPKGKNWNLAIDYWKTLKSDTGAIFDQEFNIDISNLSPQVTWGTNPSQVISINDTIPHLESYSDPIERRSAELSLLYMGLEPGMSLIDVNIQKVFIGSCTNSRIEDLRAVAKIVMNKRVCNSVHAIIVPGSGMVKMQAEKEGLDKIFKNSGFEWRYSGCSMCLAMNDDRLNNKERCASTSNRNFEGRQGRGGRTHLVSPVMAAAAAIFGRFVDVRTIYNSLDK</sequence>
<feature type="chain" id="PRO_0000076716" description="3-isopropylmalate dehydratase large subunit">
    <location>
        <begin position="1"/>
        <end position="471"/>
    </location>
</feature>
<feature type="binding site" evidence="1">
    <location>
        <position position="347"/>
    </location>
    <ligand>
        <name>[4Fe-4S] cluster</name>
        <dbReference type="ChEBI" id="CHEBI:49883"/>
    </ligand>
</feature>
<feature type="binding site" evidence="1">
    <location>
        <position position="407"/>
    </location>
    <ligand>
        <name>[4Fe-4S] cluster</name>
        <dbReference type="ChEBI" id="CHEBI:49883"/>
    </ligand>
</feature>
<feature type="binding site" evidence="1">
    <location>
        <position position="410"/>
    </location>
    <ligand>
        <name>[4Fe-4S] cluster</name>
        <dbReference type="ChEBI" id="CHEBI:49883"/>
    </ligand>
</feature>
<evidence type="ECO:0000255" key="1">
    <source>
        <dbReference type="HAMAP-Rule" id="MF_01026"/>
    </source>
</evidence>
<dbReference type="EC" id="4.2.1.33" evidence="1"/>
<dbReference type="EMBL" id="AE016826">
    <property type="protein sequence ID" value="AAO27200.1"/>
    <property type="molecule type" value="Genomic_DNA"/>
</dbReference>
<dbReference type="RefSeq" id="WP_011091601.1">
    <property type="nucleotide sequence ID" value="NC_004545.1"/>
</dbReference>
<dbReference type="SMR" id="P59519"/>
<dbReference type="STRING" id="224915.bbp_495"/>
<dbReference type="KEGG" id="bab:bbp_495"/>
<dbReference type="eggNOG" id="COG0065">
    <property type="taxonomic scope" value="Bacteria"/>
</dbReference>
<dbReference type="HOGENOM" id="CLU_006714_3_4_6"/>
<dbReference type="OrthoDB" id="9802769at2"/>
<dbReference type="UniPathway" id="UPA00048">
    <property type="reaction ID" value="UER00071"/>
</dbReference>
<dbReference type="Proteomes" id="UP000000601">
    <property type="component" value="Chromosome"/>
</dbReference>
<dbReference type="GO" id="GO:0003861">
    <property type="term" value="F:3-isopropylmalate dehydratase activity"/>
    <property type="evidence" value="ECO:0007669"/>
    <property type="project" value="UniProtKB-UniRule"/>
</dbReference>
<dbReference type="GO" id="GO:0051539">
    <property type="term" value="F:4 iron, 4 sulfur cluster binding"/>
    <property type="evidence" value="ECO:0007669"/>
    <property type="project" value="UniProtKB-KW"/>
</dbReference>
<dbReference type="GO" id="GO:0046872">
    <property type="term" value="F:metal ion binding"/>
    <property type="evidence" value="ECO:0007669"/>
    <property type="project" value="UniProtKB-KW"/>
</dbReference>
<dbReference type="GO" id="GO:0009098">
    <property type="term" value="P:L-leucine biosynthetic process"/>
    <property type="evidence" value="ECO:0007669"/>
    <property type="project" value="UniProtKB-UniRule"/>
</dbReference>
<dbReference type="CDD" id="cd01583">
    <property type="entry name" value="IPMI"/>
    <property type="match status" value="1"/>
</dbReference>
<dbReference type="FunFam" id="3.30.499.10:FF:000007">
    <property type="entry name" value="3-isopropylmalate dehydratase large subunit"/>
    <property type="match status" value="1"/>
</dbReference>
<dbReference type="Gene3D" id="3.30.499.10">
    <property type="entry name" value="Aconitase, domain 3"/>
    <property type="match status" value="2"/>
</dbReference>
<dbReference type="HAMAP" id="MF_01026">
    <property type="entry name" value="LeuC_type1"/>
    <property type="match status" value="1"/>
</dbReference>
<dbReference type="InterPro" id="IPR004430">
    <property type="entry name" value="3-IsopropMal_deHydase_lsu"/>
</dbReference>
<dbReference type="InterPro" id="IPR015931">
    <property type="entry name" value="Acnase/IPM_dHydase_lsu_aba_1/3"/>
</dbReference>
<dbReference type="InterPro" id="IPR001030">
    <property type="entry name" value="Acoase/IPM_deHydtase_lsu_aba"/>
</dbReference>
<dbReference type="InterPro" id="IPR018136">
    <property type="entry name" value="Aconitase_4Fe-4S_BS"/>
</dbReference>
<dbReference type="InterPro" id="IPR036008">
    <property type="entry name" value="Aconitase_4Fe-4S_dom"/>
</dbReference>
<dbReference type="InterPro" id="IPR050067">
    <property type="entry name" value="IPM_dehydratase_rel_enz"/>
</dbReference>
<dbReference type="InterPro" id="IPR033941">
    <property type="entry name" value="IPMI_cat"/>
</dbReference>
<dbReference type="NCBIfam" id="TIGR00170">
    <property type="entry name" value="leuC"/>
    <property type="match status" value="1"/>
</dbReference>
<dbReference type="NCBIfam" id="NF004016">
    <property type="entry name" value="PRK05478.1"/>
    <property type="match status" value="1"/>
</dbReference>
<dbReference type="NCBIfam" id="NF009116">
    <property type="entry name" value="PRK12466.1"/>
    <property type="match status" value="1"/>
</dbReference>
<dbReference type="PANTHER" id="PTHR43822:SF9">
    <property type="entry name" value="3-ISOPROPYLMALATE DEHYDRATASE"/>
    <property type="match status" value="1"/>
</dbReference>
<dbReference type="PANTHER" id="PTHR43822">
    <property type="entry name" value="HOMOACONITASE, MITOCHONDRIAL-RELATED"/>
    <property type="match status" value="1"/>
</dbReference>
<dbReference type="Pfam" id="PF00330">
    <property type="entry name" value="Aconitase"/>
    <property type="match status" value="1"/>
</dbReference>
<dbReference type="PRINTS" id="PR00415">
    <property type="entry name" value="ACONITASE"/>
</dbReference>
<dbReference type="SUPFAM" id="SSF53732">
    <property type="entry name" value="Aconitase iron-sulfur domain"/>
    <property type="match status" value="1"/>
</dbReference>
<dbReference type="PROSITE" id="PS00450">
    <property type="entry name" value="ACONITASE_1"/>
    <property type="match status" value="1"/>
</dbReference>
<dbReference type="PROSITE" id="PS01244">
    <property type="entry name" value="ACONITASE_2"/>
    <property type="match status" value="1"/>
</dbReference>
<keyword id="KW-0004">4Fe-4S</keyword>
<keyword id="KW-0028">Amino-acid biosynthesis</keyword>
<keyword id="KW-0100">Branched-chain amino acid biosynthesis</keyword>
<keyword id="KW-0408">Iron</keyword>
<keyword id="KW-0411">Iron-sulfur</keyword>
<keyword id="KW-0432">Leucine biosynthesis</keyword>
<keyword id="KW-0456">Lyase</keyword>
<keyword id="KW-0479">Metal-binding</keyword>
<keyword id="KW-1185">Reference proteome</keyword>
<name>LEUC_BUCBP</name>
<gene>
    <name evidence="1" type="primary">leuC</name>
    <name type="ordered locus">bbp_495</name>
</gene>
<reference key="1">
    <citation type="journal article" date="2003" name="Proc. Natl. Acad. Sci. U.S.A.">
        <title>Reductive genome evolution in Buchnera aphidicola.</title>
        <authorList>
            <person name="van Ham R.C.H.J."/>
            <person name="Kamerbeek J."/>
            <person name="Palacios C."/>
            <person name="Rausell C."/>
            <person name="Abascal F."/>
            <person name="Bastolla U."/>
            <person name="Fernandez J.M."/>
            <person name="Jimenez L."/>
            <person name="Postigo M."/>
            <person name="Silva F.J."/>
            <person name="Tamames J."/>
            <person name="Viguera E."/>
            <person name="Latorre A."/>
            <person name="Valencia A."/>
            <person name="Moran F."/>
            <person name="Moya A."/>
        </authorList>
    </citation>
    <scope>NUCLEOTIDE SEQUENCE [LARGE SCALE GENOMIC DNA]</scope>
    <source>
        <strain>Bp</strain>
    </source>
</reference>
<proteinExistence type="inferred from homology"/>
<protein>
    <recommendedName>
        <fullName evidence="1">3-isopropylmalate dehydratase large subunit</fullName>
        <ecNumber evidence="1">4.2.1.33</ecNumber>
    </recommendedName>
    <alternativeName>
        <fullName evidence="1">Alpha-IPM isomerase</fullName>
        <shortName evidence="1">IPMI</shortName>
    </alternativeName>
    <alternativeName>
        <fullName evidence="1">Isopropylmalate isomerase</fullName>
    </alternativeName>
</protein>
<accession>P59519</accession>
<organism>
    <name type="scientific">Buchnera aphidicola subsp. Baizongia pistaciae (strain Bp)</name>
    <dbReference type="NCBI Taxonomy" id="224915"/>
    <lineage>
        <taxon>Bacteria</taxon>
        <taxon>Pseudomonadati</taxon>
        <taxon>Pseudomonadota</taxon>
        <taxon>Gammaproteobacteria</taxon>
        <taxon>Enterobacterales</taxon>
        <taxon>Erwiniaceae</taxon>
        <taxon>Buchnera</taxon>
    </lineage>
</organism>